<sequence>MIVRSLPAALRACARLQPHDPAFTFMDYEQDWDGVAITLTWSQLYRRTLNVARELSRCGSTGDRVVISAPQGLEYVVAFLGALQAGRIAVPLSVPQGGVTDERSDSVLSDSSPVAILTTSSAVDDVVQHVARRPGESPPSIIEVDLLDLDAPNGYTFKEDEYPSTAYLQYTSGSTRTPAGVVMSHQNVRVNFEQLMSGYFADTDGIPPPNSALVSWLPFYHDMGLVIGICAPILGGYPAVLTSPVSFLQRPARWMHLMASDFHAFSAAPNFAFELAARRTTDDDMAGRDLGNILTILSGSERVQAATIKRFADRFARFNLQERVIRPSYGLAEATVYVATSKPGQPPETVDFDTESLSAGHAKPCAGGGATSLISYMLPRSPIVRIVDSDTCIECPDGTVGEIWVHGDNVANGYWQKPDESERTFGGKIVTPSPGTPEGPWLRTGDSGFVTDGKMFIIGRIKDLLIVYGRNHSPDDIEATIQEITRGRCAAISVPGDRSTEKLVAIIELKKRGDSDQDAMARLGAIKREVTSALSSSHGLSVADLVLVAPGSIPITTSGKVRRGACVEQYRQDQFARLDA</sequence>
<proteinExistence type="inferred from homology"/>
<keyword id="KW-0067">ATP-binding</keyword>
<keyword id="KW-0276">Fatty acid metabolism</keyword>
<keyword id="KW-0436">Ligase</keyword>
<keyword id="KW-0443">Lipid metabolism</keyword>
<keyword id="KW-0547">Nucleotide-binding</keyword>
<keyword id="KW-1185">Reference proteome</keyword>
<name>FAA28_MYCBO</name>
<protein>
    <recommendedName>
        <fullName evidence="4">Long-chain-fatty-acid--AMP ligase FadD28</fullName>
        <ecNumber evidence="1">6.2.1.49</ecNumber>
    </recommendedName>
    <alternativeName>
        <fullName>Acyl-AMP synthetase</fullName>
    </alternativeName>
    <alternativeName>
        <fullName evidence="4">Long-chain fatty acid adenylyltransferase FadD28</fullName>
    </alternativeName>
</protein>
<accession>Q02278</accession>
<accession>A0A1R3Y2T9</accession>
<accession>Q7TXL1</accession>
<accession>X2BM82</accession>
<gene>
    <name type="primary">fadD28</name>
    <name evidence="5" type="synonym">acoas</name>
    <name type="ordered locus">BQ2027_MB2966</name>
</gene>
<feature type="chain" id="PRO_0000193139" description="Long-chain-fatty-acid--AMP ligase FadD28">
    <location>
        <begin position="1"/>
        <end position="580"/>
    </location>
</feature>
<feature type="region of interest" description="Disordered" evidence="2">
    <location>
        <begin position="421"/>
        <end position="440"/>
    </location>
</feature>
<feature type="sequence conflict" description="In Ref. 3; AAA25367." evidence="4" ref="3">
    <original>I</original>
    <variation>S</variation>
    <location>
        <position position="2"/>
    </location>
</feature>
<feature type="sequence conflict" description="In Ref. 3; AAA25367." evidence="4" ref="3">
    <original>A</original>
    <variation>R</variation>
    <location>
        <position position="69"/>
    </location>
</feature>
<feature type="sequence conflict" description="In Ref. 3; AAA25367." evidence="4" ref="3">
    <original>R</original>
    <variation>P</variation>
    <location>
        <position position="310"/>
    </location>
</feature>
<feature type="sequence conflict" description="In Ref. 3; AAA25367." evidence="4" ref="3">
    <original>S</original>
    <variation>R</variation>
    <location>
        <position position="375"/>
    </location>
</feature>
<dbReference type="EC" id="6.2.1.49" evidence="1"/>
<dbReference type="EMBL" id="LT708304">
    <property type="protein sequence ID" value="SIU01587.1"/>
    <property type="molecule type" value="Genomic_DNA"/>
</dbReference>
<dbReference type="EMBL" id="M95808">
    <property type="protein sequence ID" value="AAA25367.1"/>
    <property type="status" value="ALT_FRAME"/>
    <property type="molecule type" value="Genomic_DNA"/>
</dbReference>
<dbReference type="RefSeq" id="NP_856611.1">
    <property type="nucleotide sequence ID" value="NC_002945.3"/>
</dbReference>
<dbReference type="RefSeq" id="WP_010950803.1">
    <property type="nucleotide sequence ID" value="NC_002945.4"/>
</dbReference>
<dbReference type="SMR" id="Q02278"/>
<dbReference type="KEGG" id="mbo:BQ2027_MB2966"/>
<dbReference type="PATRIC" id="fig|233413.5.peg.3255"/>
<dbReference type="BioCyc" id="MetaCyc:MONOMER-19638"/>
<dbReference type="BRENDA" id="6.2.1.49">
    <property type="organism ID" value="3494"/>
</dbReference>
<dbReference type="UniPathway" id="UPA00094"/>
<dbReference type="Proteomes" id="UP000001419">
    <property type="component" value="Chromosome"/>
</dbReference>
<dbReference type="GO" id="GO:0005886">
    <property type="term" value="C:plasma membrane"/>
    <property type="evidence" value="ECO:0007669"/>
    <property type="project" value="TreeGrafter"/>
</dbReference>
<dbReference type="GO" id="GO:0070566">
    <property type="term" value="F:adenylyltransferase activity"/>
    <property type="evidence" value="ECO:0007669"/>
    <property type="project" value="TreeGrafter"/>
</dbReference>
<dbReference type="GO" id="GO:0005524">
    <property type="term" value="F:ATP binding"/>
    <property type="evidence" value="ECO:0007669"/>
    <property type="project" value="UniProtKB-KW"/>
</dbReference>
<dbReference type="GO" id="GO:0016874">
    <property type="term" value="F:ligase activity"/>
    <property type="evidence" value="ECO:0007669"/>
    <property type="project" value="UniProtKB-KW"/>
</dbReference>
<dbReference type="GO" id="GO:0071766">
    <property type="term" value="P:Actinobacterium-type cell wall biogenesis"/>
    <property type="evidence" value="ECO:0007669"/>
    <property type="project" value="UniProtKB-ARBA"/>
</dbReference>
<dbReference type="GO" id="GO:0006633">
    <property type="term" value="P:fatty acid biosynthetic process"/>
    <property type="evidence" value="ECO:0007669"/>
    <property type="project" value="UniProtKB-UniPathway"/>
</dbReference>
<dbReference type="CDD" id="cd05931">
    <property type="entry name" value="FAAL"/>
    <property type="match status" value="1"/>
</dbReference>
<dbReference type="FunFam" id="3.30.300.30:FF:000016">
    <property type="entry name" value="Fatty-acid-CoA ligase FadD26"/>
    <property type="match status" value="1"/>
</dbReference>
<dbReference type="FunFam" id="3.40.50.12780:FF:000013">
    <property type="entry name" value="Long-chain-fatty-acid--AMP ligase FadD32"/>
    <property type="match status" value="1"/>
</dbReference>
<dbReference type="Gene3D" id="3.30.300.30">
    <property type="match status" value="1"/>
</dbReference>
<dbReference type="Gene3D" id="3.40.50.12780">
    <property type="entry name" value="N-terminal domain of ligase-like"/>
    <property type="match status" value="1"/>
</dbReference>
<dbReference type="InterPro" id="IPR025110">
    <property type="entry name" value="AMP-bd_C"/>
</dbReference>
<dbReference type="InterPro" id="IPR045851">
    <property type="entry name" value="AMP-bd_C_sf"/>
</dbReference>
<dbReference type="InterPro" id="IPR000873">
    <property type="entry name" value="AMP-dep_synth/lig_dom"/>
</dbReference>
<dbReference type="InterPro" id="IPR042099">
    <property type="entry name" value="ANL_N_sf"/>
</dbReference>
<dbReference type="InterPro" id="IPR040097">
    <property type="entry name" value="FAAL/FAAC"/>
</dbReference>
<dbReference type="InterPro" id="IPR053437">
    <property type="entry name" value="LCFA-AMP_ligase_FadD28"/>
</dbReference>
<dbReference type="NCBIfam" id="NF038338">
    <property type="entry name" value="FAAL_FadD28"/>
    <property type="match status" value="1"/>
</dbReference>
<dbReference type="NCBIfam" id="NF004509">
    <property type="entry name" value="PRK05850.1"/>
    <property type="match status" value="1"/>
</dbReference>
<dbReference type="PANTHER" id="PTHR22754:SF32">
    <property type="entry name" value="DISCO-INTERACTING PROTEIN 2"/>
    <property type="match status" value="1"/>
</dbReference>
<dbReference type="PANTHER" id="PTHR22754">
    <property type="entry name" value="DISCO-INTERACTING PROTEIN 2 DIP2 -RELATED"/>
    <property type="match status" value="1"/>
</dbReference>
<dbReference type="Pfam" id="PF00501">
    <property type="entry name" value="AMP-binding"/>
    <property type="match status" value="1"/>
</dbReference>
<dbReference type="Pfam" id="PF23024">
    <property type="entry name" value="AMP-dom_DIP2-like"/>
    <property type="match status" value="1"/>
</dbReference>
<dbReference type="SUPFAM" id="SSF56801">
    <property type="entry name" value="Acetyl-CoA synthetase-like"/>
    <property type="match status" value="1"/>
</dbReference>
<comment type="function">
    <text evidence="1">Involved in the biosynthesis of phthiocerol dimycocerosate (PDIM), a cell wall-associated lipid found only in pathogenic mycobacteria. Catalyzes the activation of long-chain fatty acids as acyl-adenylates (acyl-AMP), which are then transferred to the multifunctional polyketide synthase Mas for further chain extension.</text>
</comment>
<comment type="catalytic activity">
    <reaction evidence="1">
        <text>holo-[mycocerosate synthase] + a long-chain fatty acid + ATP = a long-chain fatty acyl-[mycocerosate synthase] + AMP + diphosphate</text>
        <dbReference type="Rhea" id="RHEA:10696"/>
        <dbReference type="Rhea" id="RHEA-COMP:12641"/>
        <dbReference type="Rhea" id="RHEA-COMP:13239"/>
        <dbReference type="ChEBI" id="CHEBI:30616"/>
        <dbReference type="ChEBI" id="CHEBI:33019"/>
        <dbReference type="ChEBI" id="CHEBI:57560"/>
        <dbReference type="ChEBI" id="CHEBI:64479"/>
        <dbReference type="ChEBI" id="CHEBI:133243"/>
        <dbReference type="ChEBI" id="CHEBI:456215"/>
        <dbReference type="EC" id="6.2.1.49"/>
    </reaction>
    <physiologicalReaction direction="left-to-right" evidence="1">
        <dbReference type="Rhea" id="RHEA:10697"/>
    </physiologicalReaction>
</comment>
<comment type="catalytic activity">
    <reaction evidence="1">
        <text>a long-chain fatty acid + ATP + H(+) = a long-chain fatty acyl-AMP + diphosphate</text>
        <dbReference type="Rhea" id="RHEA:52336"/>
        <dbReference type="ChEBI" id="CHEBI:15378"/>
        <dbReference type="ChEBI" id="CHEBI:30616"/>
        <dbReference type="ChEBI" id="CHEBI:33019"/>
        <dbReference type="ChEBI" id="CHEBI:57560"/>
        <dbReference type="ChEBI" id="CHEBI:136562"/>
    </reaction>
    <physiologicalReaction direction="left-to-right" evidence="1">
        <dbReference type="Rhea" id="RHEA:52337"/>
    </physiologicalReaction>
</comment>
<comment type="catalytic activity">
    <reaction evidence="1">
        <text>holo-[mycocerosate synthase] + a long-chain fatty acyl-AMP = a long-chain fatty acyl-[mycocerosate synthase] + AMP + H(+)</text>
        <dbReference type="Rhea" id="RHEA:52340"/>
        <dbReference type="Rhea" id="RHEA-COMP:12641"/>
        <dbReference type="Rhea" id="RHEA-COMP:13239"/>
        <dbReference type="ChEBI" id="CHEBI:15378"/>
        <dbReference type="ChEBI" id="CHEBI:64479"/>
        <dbReference type="ChEBI" id="CHEBI:133243"/>
        <dbReference type="ChEBI" id="CHEBI:136562"/>
        <dbReference type="ChEBI" id="CHEBI:456215"/>
    </reaction>
    <physiologicalReaction direction="left-to-right" evidence="1">
        <dbReference type="Rhea" id="RHEA:52341"/>
    </physiologicalReaction>
</comment>
<comment type="pathway">
    <text evidence="3">Lipid metabolism; fatty acid biosynthesis.</text>
</comment>
<comment type="disruption phenotype">
    <text evidence="3">Disruption mutant lacks the ability to produce mycosides and mycocerosyl phthiocerol esters.</text>
</comment>
<comment type="similarity">
    <text evidence="4">Belongs to the ATP-dependent AMP-binding enzyme family.</text>
</comment>
<comment type="sequence caution" evidence="4">
    <conflict type="frameshift">
        <sequence resource="EMBL-CDS" id="AAA25367"/>
    </conflict>
</comment>
<evidence type="ECO:0000250" key="1">
    <source>
        <dbReference type="UniProtKB" id="P9WQ59"/>
    </source>
</evidence>
<evidence type="ECO:0000256" key="2">
    <source>
        <dbReference type="SAM" id="MobiDB-lite"/>
    </source>
</evidence>
<evidence type="ECO:0000269" key="3">
    <source>
    </source>
</evidence>
<evidence type="ECO:0000305" key="4"/>
<evidence type="ECO:0000312" key="5">
    <source>
        <dbReference type="EMBL" id="SIU01587.1"/>
    </source>
</evidence>
<reference key="1">
    <citation type="journal article" date="2003" name="Proc. Natl. Acad. Sci. U.S.A.">
        <title>The complete genome sequence of Mycobacterium bovis.</title>
        <authorList>
            <person name="Garnier T."/>
            <person name="Eiglmeier K."/>
            <person name="Camus J.-C."/>
            <person name="Medina N."/>
            <person name="Mansoor H."/>
            <person name="Pryor M."/>
            <person name="Duthoy S."/>
            <person name="Grondin S."/>
            <person name="Lacroix C."/>
            <person name="Monsempe C."/>
            <person name="Simon S."/>
            <person name="Harris B."/>
            <person name="Atkin R."/>
            <person name="Doggett J."/>
            <person name="Mayes R."/>
            <person name="Keating L."/>
            <person name="Wheeler P.R."/>
            <person name="Parkhill J."/>
            <person name="Barrell B.G."/>
            <person name="Cole S.T."/>
            <person name="Gordon S.V."/>
            <person name="Hewinson R.G."/>
        </authorList>
    </citation>
    <scope>NUCLEOTIDE SEQUENCE [LARGE SCALE GENOMIC DNA]</scope>
    <source>
        <strain>ATCC BAA-935 / AF2122/97</strain>
    </source>
</reference>
<reference key="2">
    <citation type="journal article" date="2017" name="Genome Announc.">
        <title>Updated reference genome sequence and annotation of Mycobacterium bovis AF2122/97.</title>
        <authorList>
            <person name="Malone K.M."/>
            <person name="Farrell D."/>
            <person name="Stuber T.P."/>
            <person name="Schubert O.T."/>
            <person name="Aebersold R."/>
            <person name="Robbe-Austerman S."/>
            <person name="Gordon S.V."/>
        </authorList>
    </citation>
    <scope>NUCLEOTIDE SEQUENCE [LARGE SCALE GENOMIC DNA]</scope>
    <scope>GENOME REANNOTATION</scope>
    <source>
        <strain>ATCC BAA-935 / AF2122/97</strain>
    </source>
</reference>
<reference key="3">
    <citation type="journal article" date="1992" name="J. Biol. Chem.">
        <title>Molecular cloning and sequencing of the gene for mycocerosic acid synthase, a novel fatty acid elongating multifunctional enzyme, from Mycobacterium tuberculosis var. bovis Bacillus Calmette-Guerin.</title>
        <authorList>
            <person name="Mathur M."/>
            <person name="Kolattukudy P.E."/>
        </authorList>
    </citation>
    <scope>NUCLEOTIDE SEQUENCE [GENOMIC DNA] OF 1-375</scope>
    <source>
        <strain>BCG</strain>
    </source>
</reference>
<reference key="4">
    <citation type="journal article" date="1998" name="J. Biol. Chem.">
        <title>An acyl-CoA synthase (acoas) gene adjacent to the mycocerosic acid synthase (mas) locus is necessary for mycocerosyl lipid synthesis in Mycobacterium tuberculosis var. bovis BCG.</title>
        <authorList>
            <person name="Fitzmaurice A.M."/>
            <person name="Kolattukudy P.E."/>
        </authorList>
    </citation>
    <scope>PATHWAY</scope>
    <scope>DISRUPTION PHENOTYPE</scope>
    <source>
        <strain>BCG</strain>
    </source>
</reference>
<organism>
    <name type="scientific">Mycobacterium bovis (strain ATCC BAA-935 / AF2122/97)</name>
    <dbReference type="NCBI Taxonomy" id="233413"/>
    <lineage>
        <taxon>Bacteria</taxon>
        <taxon>Bacillati</taxon>
        <taxon>Actinomycetota</taxon>
        <taxon>Actinomycetes</taxon>
        <taxon>Mycobacteriales</taxon>
        <taxon>Mycobacteriaceae</taxon>
        <taxon>Mycobacterium</taxon>
        <taxon>Mycobacterium tuberculosis complex</taxon>
    </lineage>
</organism>